<name>NTDP_BACHK</name>
<protein>
    <recommendedName>
        <fullName evidence="1">Nucleoside triphosphate/diphosphate phosphatase</fullName>
        <ecNumber evidence="1">3.6.1.15</ecNumber>
        <ecNumber evidence="1">3.6.1.6</ecNumber>
    </recommendedName>
</protein>
<accession>Q6HNT2</accession>
<keyword id="KW-0378">Hydrolase</keyword>
<keyword id="KW-0460">Magnesium</keyword>
<keyword id="KW-0479">Metal-binding</keyword>
<proteinExistence type="inferred from homology"/>
<gene>
    <name type="ordered locus">BT9727_0438</name>
</gene>
<evidence type="ECO:0000255" key="1">
    <source>
        <dbReference type="HAMAP-Rule" id="MF_01568"/>
    </source>
</evidence>
<reference key="1">
    <citation type="journal article" date="2006" name="J. Bacteriol.">
        <title>Pathogenomic sequence analysis of Bacillus cereus and Bacillus thuringiensis isolates closely related to Bacillus anthracis.</title>
        <authorList>
            <person name="Han C.S."/>
            <person name="Xie G."/>
            <person name="Challacombe J.F."/>
            <person name="Altherr M.R."/>
            <person name="Bhotika S.S."/>
            <person name="Bruce D."/>
            <person name="Campbell C.S."/>
            <person name="Campbell M.L."/>
            <person name="Chen J."/>
            <person name="Chertkov O."/>
            <person name="Cleland C."/>
            <person name="Dimitrijevic M."/>
            <person name="Doggett N.A."/>
            <person name="Fawcett J.J."/>
            <person name="Glavina T."/>
            <person name="Goodwin L.A."/>
            <person name="Hill K.K."/>
            <person name="Hitchcock P."/>
            <person name="Jackson P.J."/>
            <person name="Keim P."/>
            <person name="Kewalramani A.R."/>
            <person name="Longmire J."/>
            <person name="Lucas S."/>
            <person name="Malfatti S."/>
            <person name="McMurry K."/>
            <person name="Meincke L.J."/>
            <person name="Misra M."/>
            <person name="Moseman B.L."/>
            <person name="Mundt M."/>
            <person name="Munk A.C."/>
            <person name="Okinaka R.T."/>
            <person name="Parson-Quintana B."/>
            <person name="Reilly L.P."/>
            <person name="Richardson P."/>
            <person name="Robinson D.L."/>
            <person name="Rubin E."/>
            <person name="Saunders E."/>
            <person name="Tapia R."/>
            <person name="Tesmer J.G."/>
            <person name="Thayer N."/>
            <person name="Thompson L.S."/>
            <person name="Tice H."/>
            <person name="Ticknor L.O."/>
            <person name="Wills P.L."/>
            <person name="Brettin T.S."/>
            <person name="Gilna P."/>
        </authorList>
    </citation>
    <scope>NUCLEOTIDE SEQUENCE [LARGE SCALE GENOMIC DNA]</scope>
    <source>
        <strain>97-27</strain>
    </source>
</reference>
<sequence>MGFPKEGEKVQIHSYKHNGSIHRMWEETTILKGTQSLVIGANDRTVVTESDGRTWITREPAICYFHANYWFNVIGMLREEGVYYYCNLSSPFAYDSEALKYIDYDLDIKVYPDMTYTLLDEDEYEKHSQIMQYPPVIDTILKRNVAQLTQWIHQRKGPFAPDFVDMWYERYLMYRN</sequence>
<comment type="function">
    <text evidence="1">Has nucleoside phosphatase activity towards nucleoside triphosphates and nucleoside diphosphates.</text>
</comment>
<comment type="catalytic activity">
    <reaction evidence="1">
        <text>a ribonucleoside 5'-triphosphate + H2O = a ribonucleoside 5'-diphosphate + phosphate + H(+)</text>
        <dbReference type="Rhea" id="RHEA:23680"/>
        <dbReference type="ChEBI" id="CHEBI:15377"/>
        <dbReference type="ChEBI" id="CHEBI:15378"/>
        <dbReference type="ChEBI" id="CHEBI:43474"/>
        <dbReference type="ChEBI" id="CHEBI:57930"/>
        <dbReference type="ChEBI" id="CHEBI:61557"/>
        <dbReference type="EC" id="3.6.1.15"/>
    </reaction>
</comment>
<comment type="catalytic activity">
    <reaction evidence="1">
        <text>a ribonucleoside 5'-diphosphate + H2O = a ribonucleoside 5'-phosphate + phosphate + H(+)</text>
        <dbReference type="Rhea" id="RHEA:36799"/>
        <dbReference type="ChEBI" id="CHEBI:15377"/>
        <dbReference type="ChEBI" id="CHEBI:15378"/>
        <dbReference type="ChEBI" id="CHEBI:43474"/>
        <dbReference type="ChEBI" id="CHEBI:57930"/>
        <dbReference type="ChEBI" id="CHEBI:58043"/>
        <dbReference type="EC" id="3.6.1.6"/>
    </reaction>
</comment>
<comment type="cofactor">
    <cofactor evidence="1">
        <name>Mg(2+)</name>
        <dbReference type="ChEBI" id="CHEBI:18420"/>
    </cofactor>
</comment>
<comment type="similarity">
    <text evidence="1">Belongs to the Ntdp family.</text>
</comment>
<dbReference type="EC" id="3.6.1.15" evidence="1"/>
<dbReference type="EC" id="3.6.1.6" evidence="1"/>
<dbReference type="EMBL" id="AE017355">
    <property type="protein sequence ID" value="AAT62071.1"/>
    <property type="molecule type" value="Genomic_DNA"/>
</dbReference>
<dbReference type="RefSeq" id="WP_000506628.1">
    <property type="nucleotide sequence ID" value="NC_005957.1"/>
</dbReference>
<dbReference type="RefSeq" id="YP_034788.1">
    <property type="nucleotide sequence ID" value="NC_005957.1"/>
</dbReference>
<dbReference type="SMR" id="Q6HNT2"/>
<dbReference type="KEGG" id="btk:BT9727_0438"/>
<dbReference type="PATRIC" id="fig|281309.8.peg.468"/>
<dbReference type="HOGENOM" id="CLU_109787_1_0_9"/>
<dbReference type="Proteomes" id="UP000001301">
    <property type="component" value="Chromosome"/>
</dbReference>
<dbReference type="GO" id="GO:0000287">
    <property type="term" value="F:magnesium ion binding"/>
    <property type="evidence" value="ECO:0007669"/>
    <property type="project" value="UniProtKB-UniRule"/>
</dbReference>
<dbReference type="GO" id="GO:0017110">
    <property type="term" value="F:nucleoside diphosphate phosphatase activity"/>
    <property type="evidence" value="ECO:0007669"/>
    <property type="project" value="UniProtKB-UniRule"/>
</dbReference>
<dbReference type="GO" id="GO:0017111">
    <property type="term" value="F:ribonucleoside triphosphate phosphatase activity"/>
    <property type="evidence" value="ECO:0007669"/>
    <property type="project" value="UniProtKB-UniRule"/>
</dbReference>
<dbReference type="Gene3D" id="2.40.380.10">
    <property type="entry name" value="FomD-like"/>
    <property type="match status" value="1"/>
</dbReference>
<dbReference type="HAMAP" id="MF_01568">
    <property type="entry name" value="Ntdp"/>
    <property type="match status" value="1"/>
</dbReference>
<dbReference type="InterPro" id="IPR007295">
    <property type="entry name" value="DUF402"/>
</dbReference>
<dbReference type="InterPro" id="IPR035930">
    <property type="entry name" value="FomD-like_sf"/>
</dbReference>
<dbReference type="InterPro" id="IPR050212">
    <property type="entry name" value="Ntdp-like"/>
</dbReference>
<dbReference type="InterPro" id="IPR016882">
    <property type="entry name" value="SA1684"/>
</dbReference>
<dbReference type="NCBIfam" id="NF010183">
    <property type="entry name" value="PRK13662.1"/>
    <property type="match status" value="1"/>
</dbReference>
<dbReference type="PANTHER" id="PTHR39159">
    <property type="match status" value="1"/>
</dbReference>
<dbReference type="PANTHER" id="PTHR39159:SF1">
    <property type="entry name" value="UPF0374 PROTEIN YGAC"/>
    <property type="match status" value="1"/>
</dbReference>
<dbReference type="Pfam" id="PF04167">
    <property type="entry name" value="DUF402"/>
    <property type="match status" value="1"/>
</dbReference>
<dbReference type="PIRSF" id="PIRSF028345">
    <property type="entry name" value="UCP028345"/>
    <property type="match status" value="1"/>
</dbReference>
<dbReference type="SUPFAM" id="SSF159234">
    <property type="entry name" value="FomD-like"/>
    <property type="match status" value="1"/>
</dbReference>
<feature type="chain" id="PRO_0000248089" description="Nucleoside triphosphate/diphosphate phosphatase">
    <location>
        <begin position="1"/>
        <end position="176"/>
    </location>
</feature>
<feature type="active site" description="Proton donor" evidence="1">
    <location>
        <position position="23"/>
    </location>
</feature>
<feature type="binding site" evidence="1">
    <location>
        <position position="87"/>
    </location>
    <ligand>
        <name>Mg(2+)</name>
        <dbReference type="ChEBI" id="CHEBI:18420"/>
        <label>1</label>
    </ligand>
</feature>
<feature type="binding site" evidence="1">
    <location>
        <position position="103"/>
    </location>
    <ligand>
        <name>Mg(2+)</name>
        <dbReference type="ChEBI" id="CHEBI:18420"/>
        <label>1</label>
    </ligand>
</feature>
<feature type="binding site" evidence="1">
    <location>
        <position position="105"/>
    </location>
    <ligand>
        <name>Mg(2+)</name>
        <dbReference type="ChEBI" id="CHEBI:18420"/>
        <label>2</label>
    </ligand>
</feature>
<feature type="binding site" evidence="1">
    <location>
        <position position="107"/>
    </location>
    <ligand>
        <name>Mg(2+)</name>
        <dbReference type="ChEBI" id="CHEBI:18420"/>
        <label>1</label>
    </ligand>
</feature>
<feature type="binding site" evidence="1">
    <location>
        <position position="107"/>
    </location>
    <ligand>
        <name>Mg(2+)</name>
        <dbReference type="ChEBI" id="CHEBI:18420"/>
        <label>2</label>
    </ligand>
</feature>
<feature type="binding site" evidence="1">
    <location>
        <position position="120"/>
    </location>
    <ligand>
        <name>Mg(2+)</name>
        <dbReference type="ChEBI" id="CHEBI:18420"/>
        <label>2</label>
    </ligand>
</feature>
<feature type="binding site" evidence="1">
    <location>
        <position position="123"/>
    </location>
    <ligand>
        <name>Mg(2+)</name>
        <dbReference type="ChEBI" id="CHEBI:18420"/>
        <label>2</label>
    </ligand>
</feature>
<organism>
    <name type="scientific">Bacillus thuringiensis subsp. konkukian (strain 97-27)</name>
    <dbReference type="NCBI Taxonomy" id="281309"/>
    <lineage>
        <taxon>Bacteria</taxon>
        <taxon>Bacillati</taxon>
        <taxon>Bacillota</taxon>
        <taxon>Bacilli</taxon>
        <taxon>Bacillales</taxon>
        <taxon>Bacillaceae</taxon>
        <taxon>Bacillus</taxon>
        <taxon>Bacillus cereus group</taxon>
    </lineage>
</organism>